<feature type="chain" id="PRO_0000190127" description="Pyridoxine 5'-phosphate synthase">
    <location>
        <begin position="1"/>
        <end position="246"/>
    </location>
</feature>
<feature type="active site" description="Proton acceptor" evidence="1">
    <location>
        <position position="44"/>
    </location>
</feature>
<feature type="active site" description="Proton acceptor" evidence="1">
    <location>
        <position position="76"/>
    </location>
</feature>
<feature type="active site" description="Proton donor" evidence="1">
    <location>
        <position position="198"/>
    </location>
</feature>
<feature type="binding site" evidence="1">
    <location>
        <position position="8"/>
    </location>
    <ligand>
        <name>3-amino-2-oxopropyl phosphate</name>
        <dbReference type="ChEBI" id="CHEBI:57279"/>
    </ligand>
</feature>
<feature type="binding site" evidence="1">
    <location>
        <position position="19"/>
    </location>
    <ligand>
        <name>3-amino-2-oxopropyl phosphate</name>
        <dbReference type="ChEBI" id="CHEBI:57279"/>
    </ligand>
</feature>
<feature type="binding site" evidence="1">
    <location>
        <position position="46"/>
    </location>
    <ligand>
        <name>1-deoxy-D-xylulose 5-phosphate</name>
        <dbReference type="ChEBI" id="CHEBI:57792"/>
    </ligand>
</feature>
<feature type="binding site" evidence="1">
    <location>
        <position position="51"/>
    </location>
    <ligand>
        <name>1-deoxy-D-xylulose 5-phosphate</name>
        <dbReference type="ChEBI" id="CHEBI:57792"/>
    </ligand>
</feature>
<feature type="binding site" evidence="1">
    <location>
        <position position="106"/>
    </location>
    <ligand>
        <name>1-deoxy-D-xylulose 5-phosphate</name>
        <dbReference type="ChEBI" id="CHEBI:57792"/>
    </ligand>
</feature>
<feature type="binding site" evidence="1">
    <location>
        <position position="199"/>
    </location>
    <ligand>
        <name>3-amino-2-oxopropyl phosphate</name>
        <dbReference type="ChEBI" id="CHEBI:57279"/>
    </ligand>
</feature>
<feature type="binding site" evidence="1">
    <location>
        <begin position="221"/>
        <end position="222"/>
    </location>
    <ligand>
        <name>3-amino-2-oxopropyl phosphate</name>
        <dbReference type="ChEBI" id="CHEBI:57279"/>
    </ligand>
</feature>
<feature type="site" description="Transition state stabilizer" evidence="1">
    <location>
        <position position="157"/>
    </location>
</feature>
<dbReference type="EC" id="2.6.99.2" evidence="1"/>
<dbReference type="EMBL" id="BA000012">
    <property type="protein sequence ID" value="BAB48798.1"/>
    <property type="molecule type" value="Genomic_DNA"/>
</dbReference>
<dbReference type="RefSeq" id="WP_010910151.1">
    <property type="nucleotide sequence ID" value="NC_002678.2"/>
</dbReference>
<dbReference type="SMR" id="Q98KL6"/>
<dbReference type="KEGG" id="mlo:mll1418"/>
<dbReference type="PATRIC" id="fig|266835.9.peg.1145"/>
<dbReference type="eggNOG" id="COG0854">
    <property type="taxonomic scope" value="Bacteria"/>
</dbReference>
<dbReference type="HOGENOM" id="CLU_074563_1_0_5"/>
<dbReference type="UniPathway" id="UPA00244">
    <property type="reaction ID" value="UER00313"/>
</dbReference>
<dbReference type="Proteomes" id="UP000000552">
    <property type="component" value="Chromosome"/>
</dbReference>
<dbReference type="GO" id="GO:0005829">
    <property type="term" value="C:cytosol"/>
    <property type="evidence" value="ECO:0007669"/>
    <property type="project" value="TreeGrafter"/>
</dbReference>
<dbReference type="GO" id="GO:0033856">
    <property type="term" value="F:pyridoxine 5'-phosphate synthase activity"/>
    <property type="evidence" value="ECO:0007669"/>
    <property type="project" value="UniProtKB-EC"/>
</dbReference>
<dbReference type="GO" id="GO:0008615">
    <property type="term" value="P:pyridoxine biosynthetic process"/>
    <property type="evidence" value="ECO:0007669"/>
    <property type="project" value="UniProtKB-UniRule"/>
</dbReference>
<dbReference type="CDD" id="cd00003">
    <property type="entry name" value="PNPsynthase"/>
    <property type="match status" value="1"/>
</dbReference>
<dbReference type="Gene3D" id="3.20.20.70">
    <property type="entry name" value="Aldolase class I"/>
    <property type="match status" value="1"/>
</dbReference>
<dbReference type="HAMAP" id="MF_00279">
    <property type="entry name" value="PdxJ"/>
    <property type="match status" value="1"/>
</dbReference>
<dbReference type="InterPro" id="IPR013785">
    <property type="entry name" value="Aldolase_TIM"/>
</dbReference>
<dbReference type="InterPro" id="IPR004569">
    <property type="entry name" value="PyrdxlP_synth_PdxJ"/>
</dbReference>
<dbReference type="InterPro" id="IPR036130">
    <property type="entry name" value="Pyridoxine-5'_phos_synth"/>
</dbReference>
<dbReference type="NCBIfam" id="TIGR00559">
    <property type="entry name" value="pdxJ"/>
    <property type="match status" value="1"/>
</dbReference>
<dbReference type="NCBIfam" id="NF003626">
    <property type="entry name" value="PRK05265.1-4"/>
    <property type="match status" value="1"/>
</dbReference>
<dbReference type="PANTHER" id="PTHR30456">
    <property type="entry name" value="PYRIDOXINE 5'-PHOSPHATE SYNTHASE"/>
    <property type="match status" value="1"/>
</dbReference>
<dbReference type="PANTHER" id="PTHR30456:SF0">
    <property type="entry name" value="PYRIDOXINE 5'-PHOSPHATE SYNTHASE"/>
    <property type="match status" value="1"/>
</dbReference>
<dbReference type="Pfam" id="PF03740">
    <property type="entry name" value="PdxJ"/>
    <property type="match status" value="1"/>
</dbReference>
<dbReference type="SUPFAM" id="SSF63892">
    <property type="entry name" value="Pyridoxine 5'-phosphate synthase"/>
    <property type="match status" value="1"/>
</dbReference>
<evidence type="ECO:0000255" key="1">
    <source>
        <dbReference type="HAMAP-Rule" id="MF_00279"/>
    </source>
</evidence>
<protein>
    <recommendedName>
        <fullName evidence="1">Pyridoxine 5'-phosphate synthase</fullName>
        <shortName evidence="1">PNP synthase</shortName>
        <ecNumber evidence="1">2.6.99.2</ecNumber>
    </recommendedName>
</protein>
<keyword id="KW-0963">Cytoplasm</keyword>
<keyword id="KW-0664">Pyridoxine biosynthesis</keyword>
<keyword id="KW-0808">Transferase</keyword>
<comment type="function">
    <text evidence="1">Catalyzes the complicated ring closure reaction between the two acyclic compounds 1-deoxy-D-xylulose-5-phosphate (DXP) and 3-amino-2-oxopropyl phosphate (1-amino-acetone-3-phosphate or AAP) to form pyridoxine 5'-phosphate (PNP) and inorganic phosphate.</text>
</comment>
<comment type="catalytic activity">
    <reaction evidence="1">
        <text>3-amino-2-oxopropyl phosphate + 1-deoxy-D-xylulose 5-phosphate = pyridoxine 5'-phosphate + phosphate + 2 H2O + H(+)</text>
        <dbReference type="Rhea" id="RHEA:15265"/>
        <dbReference type="ChEBI" id="CHEBI:15377"/>
        <dbReference type="ChEBI" id="CHEBI:15378"/>
        <dbReference type="ChEBI" id="CHEBI:43474"/>
        <dbReference type="ChEBI" id="CHEBI:57279"/>
        <dbReference type="ChEBI" id="CHEBI:57792"/>
        <dbReference type="ChEBI" id="CHEBI:58589"/>
        <dbReference type="EC" id="2.6.99.2"/>
    </reaction>
</comment>
<comment type="pathway">
    <text evidence="1">Cofactor biosynthesis; pyridoxine 5'-phosphate biosynthesis; pyridoxine 5'-phosphate from D-erythrose 4-phosphate: step 5/5.</text>
</comment>
<comment type="subunit">
    <text evidence="1">Homooctamer; tetramer of dimers.</text>
</comment>
<comment type="subcellular location">
    <subcellularLocation>
        <location evidence="1">Cytoplasm</location>
    </subcellularLocation>
</comment>
<comment type="similarity">
    <text evidence="1">Belongs to the PNP synthase family.</text>
</comment>
<accession>Q98KL6</accession>
<reference key="1">
    <citation type="journal article" date="2000" name="DNA Res.">
        <title>Complete genome structure of the nitrogen-fixing symbiotic bacterium Mesorhizobium loti.</title>
        <authorList>
            <person name="Kaneko T."/>
            <person name="Nakamura Y."/>
            <person name="Sato S."/>
            <person name="Asamizu E."/>
            <person name="Kato T."/>
            <person name="Sasamoto S."/>
            <person name="Watanabe A."/>
            <person name="Idesawa K."/>
            <person name="Ishikawa A."/>
            <person name="Kawashima K."/>
            <person name="Kimura T."/>
            <person name="Kishida Y."/>
            <person name="Kiyokawa C."/>
            <person name="Kohara M."/>
            <person name="Matsumoto M."/>
            <person name="Matsuno A."/>
            <person name="Mochizuki Y."/>
            <person name="Nakayama S."/>
            <person name="Nakazaki N."/>
            <person name="Shimpo S."/>
            <person name="Sugimoto M."/>
            <person name="Takeuchi C."/>
            <person name="Yamada M."/>
            <person name="Tabata S."/>
        </authorList>
    </citation>
    <scope>NUCLEOTIDE SEQUENCE [LARGE SCALE GENOMIC DNA]</scope>
    <source>
        <strain>LMG 29417 / CECT 9101 / MAFF 303099</strain>
    </source>
</reference>
<gene>
    <name evidence="1" type="primary">pdxJ</name>
    <name type="ordered locus">mll1418</name>
</gene>
<sequence>MPAKLSVNLNAIAMLRNRRDLPWPSVTGIGRLALAAGAHGLTVHPRPDERHTRHSDLPEIRALIDDEFPQAEFNIEGYPSEDFLALVEKHQPEQVTLVPDDPAQATSDHGWNFVADAALLTPIVRRLKKGGFRVSLFSDADPAGMTAARDTGADRIELYTGPYGSYHSDSAKADKELERLGKTADAAFAAGLQVNAGHDLTVGNLPALAKRIPALAEVSIGHGLTADALEYGMAGTVGRFLRACGW</sequence>
<organism>
    <name type="scientific">Mesorhizobium japonicum (strain LMG 29417 / CECT 9101 / MAFF 303099)</name>
    <name type="common">Mesorhizobium loti (strain MAFF 303099)</name>
    <dbReference type="NCBI Taxonomy" id="266835"/>
    <lineage>
        <taxon>Bacteria</taxon>
        <taxon>Pseudomonadati</taxon>
        <taxon>Pseudomonadota</taxon>
        <taxon>Alphaproteobacteria</taxon>
        <taxon>Hyphomicrobiales</taxon>
        <taxon>Phyllobacteriaceae</taxon>
        <taxon>Mesorhizobium</taxon>
    </lineage>
</organism>
<name>PDXJ_RHILO</name>
<proteinExistence type="inferred from homology"/>